<comment type="function">
    <text evidence="1">An accessory protein needed during the final step in the assembly of 30S ribosomal subunit, possibly for assembly of the head region. Essential for efficient processing of 16S rRNA. May be needed both before and after RbfA during the maturation of 16S rRNA. It has affinity for free ribosomal 30S subunits but not for 70S ribosomes.</text>
</comment>
<comment type="subunit">
    <text evidence="1">Binds ribosomal protein uS19.</text>
</comment>
<comment type="subcellular location">
    <subcellularLocation>
        <location evidence="1">Cytoplasm</location>
    </subcellularLocation>
</comment>
<comment type="domain">
    <text evidence="1">The PRC barrel domain binds ribosomal protein uS19.</text>
</comment>
<comment type="similarity">
    <text evidence="1">Belongs to the RimM family.</text>
</comment>
<keyword id="KW-0143">Chaperone</keyword>
<keyword id="KW-0963">Cytoplasm</keyword>
<keyword id="KW-1185">Reference proteome</keyword>
<keyword id="KW-0690">Ribosome biogenesis</keyword>
<keyword id="KW-0698">rRNA processing</keyword>
<evidence type="ECO:0000255" key="1">
    <source>
        <dbReference type="HAMAP-Rule" id="MF_00014"/>
    </source>
</evidence>
<feature type="chain" id="PRO_0000163365" description="Ribosome maturation factor RimM">
    <location>
        <begin position="1"/>
        <end position="172"/>
    </location>
</feature>
<feature type="domain" description="PRC barrel" evidence="1">
    <location>
        <begin position="96"/>
        <end position="168"/>
    </location>
</feature>
<proteinExistence type="inferred from homology"/>
<sequence>MNYFNVGKIVNTQGLQGEMRVLSVTDFAEERFKKGAELVLFDEKDQFVQTVTIASHRKQKNFDIIKFKDMYHINTIEKYKGYSLKVAEEDLNDLDDGEFYYHEIIGLEVYEGDSLVGTIKEILQPGANDVWVVKRKGKRDLLLPYIPPVVLNVDIPSKRVDVEILEGLDDED</sequence>
<accession>Q97RM5</accession>
<organism>
    <name type="scientific">Streptococcus pneumoniae serotype 4 (strain ATCC BAA-334 / TIGR4)</name>
    <dbReference type="NCBI Taxonomy" id="170187"/>
    <lineage>
        <taxon>Bacteria</taxon>
        <taxon>Bacillati</taxon>
        <taxon>Bacillota</taxon>
        <taxon>Bacilli</taxon>
        <taxon>Lactobacillales</taxon>
        <taxon>Streptococcaceae</taxon>
        <taxon>Streptococcus</taxon>
    </lineage>
</organism>
<gene>
    <name evidence="1" type="primary">rimM</name>
    <name type="ordered locus">SP_0778</name>
</gene>
<name>RIMM_STRPN</name>
<protein>
    <recommendedName>
        <fullName evidence="1">Ribosome maturation factor RimM</fullName>
    </recommendedName>
</protein>
<reference key="1">
    <citation type="journal article" date="2001" name="Science">
        <title>Complete genome sequence of a virulent isolate of Streptococcus pneumoniae.</title>
        <authorList>
            <person name="Tettelin H."/>
            <person name="Nelson K.E."/>
            <person name="Paulsen I.T."/>
            <person name="Eisen J.A."/>
            <person name="Read T.D."/>
            <person name="Peterson S.N."/>
            <person name="Heidelberg J.F."/>
            <person name="DeBoy R.T."/>
            <person name="Haft D.H."/>
            <person name="Dodson R.J."/>
            <person name="Durkin A.S."/>
            <person name="Gwinn M.L."/>
            <person name="Kolonay J.F."/>
            <person name="Nelson W.C."/>
            <person name="Peterson J.D."/>
            <person name="Umayam L.A."/>
            <person name="White O."/>
            <person name="Salzberg S.L."/>
            <person name="Lewis M.R."/>
            <person name="Radune D."/>
            <person name="Holtzapple E.K."/>
            <person name="Khouri H.M."/>
            <person name="Wolf A.M."/>
            <person name="Utterback T.R."/>
            <person name="Hansen C.L."/>
            <person name="McDonald L.A."/>
            <person name="Feldblyum T.V."/>
            <person name="Angiuoli S.V."/>
            <person name="Dickinson T."/>
            <person name="Hickey E.K."/>
            <person name="Holt I.E."/>
            <person name="Loftus B.J."/>
            <person name="Yang F."/>
            <person name="Smith H.O."/>
            <person name="Venter J.C."/>
            <person name="Dougherty B.A."/>
            <person name="Morrison D.A."/>
            <person name="Hollingshead S.K."/>
            <person name="Fraser C.M."/>
        </authorList>
    </citation>
    <scope>NUCLEOTIDE SEQUENCE [LARGE SCALE GENOMIC DNA]</scope>
    <source>
        <strain>ATCC BAA-334 / TIGR4</strain>
    </source>
</reference>
<dbReference type="EMBL" id="AE005672">
    <property type="protein sequence ID" value="AAK74916.1"/>
    <property type="molecule type" value="Genomic_DNA"/>
</dbReference>
<dbReference type="PIR" id="C95090">
    <property type="entry name" value="C95090"/>
</dbReference>
<dbReference type="RefSeq" id="WP_001105907.1">
    <property type="nucleotide sequence ID" value="NZ_CP155539.1"/>
</dbReference>
<dbReference type="SMR" id="Q97RM5"/>
<dbReference type="IntAct" id="Q97RM5">
    <property type="interactions" value="1"/>
</dbReference>
<dbReference type="PaxDb" id="170187-SP_0778"/>
<dbReference type="EnsemblBacteria" id="AAK74916">
    <property type="protein sequence ID" value="AAK74916"/>
    <property type="gene ID" value="SP_0778"/>
</dbReference>
<dbReference type="KEGG" id="spn:SP_0778"/>
<dbReference type="eggNOG" id="COG0806">
    <property type="taxonomic scope" value="Bacteria"/>
</dbReference>
<dbReference type="PhylomeDB" id="Q97RM5"/>
<dbReference type="BioCyc" id="SPNE170187:G1FZB-794-MONOMER"/>
<dbReference type="Proteomes" id="UP000000585">
    <property type="component" value="Chromosome"/>
</dbReference>
<dbReference type="GO" id="GO:0005737">
    <property type="term" value="C:cytoplasm"/>
    <property type="evidence" value="ECO:0007669"/>
    <property type="project" value="UniProtKB-SubCell"/>
</dbReference>
<dbReference type="GO" id="GO:0005840">
    <property type="term" value="C:ribosome"/>
    <property type="evidence" value="ECO:0007669"/>
    <property type="project" value="InterPro"/>
</dbReference>
<dbReference type="GO" id="GO:0043022">
    <property type="term" value="F:ribosome binding"/>
    <property type="evidence" value="ECO:0007669"/>
    <property type="project" value="InterPro"/>
</dbReference>
<dbReference type="GO" id="GO:0042274">
    <property type="term" value="P:ribosomal small subunit biogenesis"/>
    <property type="evidence" value="ECO:0007669"/>
    <property type="project" value="UniProtKB-UniRule"/>
</dbReference>
<dbReference type="GO" id="GO:0006364">
    <property type="term" value="P:rRNA processing"/>
    <property type="evidence" value="ECO:0007669"/>
    <property type="project" value="UniProtKB-UniRule"/>
</dbReference>
<dbReference type="Gene3D" id="2.30.30.240">
    <property type="entry name" value="PRC-barrel domain"/>
    <property type="match status" value="1"/>
</dbReference>
<dbReference type="Gene3D" id="2.40.30.60">
    <property type="entry name" value="RimM"/>
    <property type="match status" value="1"/>
</dbReference>
<dbReference type="HAMAP" id="MF_00014">
    <property type="entry name" value="Ribosome_mat_RimM"/>
    <property type="match status" value="1"/>
</dbReference>
<dbReference type="InterPro" id="IPR027275">
    <property type="entry name" value="PRC-brl_dom"/>
</dbReference>
<dbReference type="InterPro" id="IPR011033">
    <property type="entry name" value="PRC_barrel-like_sf"/>
</dbReference>
<dbReference type="InterPro" id="IPR011961">
    <property type="entry name" value="RimM"/>
</dbReference>
<dbReference type="InterPro" id="IPR002676">
    <property type="entry name" value="RimM_N"/>
</dbReference>
<dbReference type="InterPro" id="IPR036976">
    <property type="entry name" value="RimM_N_sf"/>
</dbReference>
<dbReference type="InterPro" id="IPR009000">
    <property type="entry name" value="Transl_B-barrel_sf"/>
</dbReference>
<dbReference type="NCBIfam" id="TIGR02273">
    <property type="entry name" value="16S_RimM"/>
    <property type="match status" value="1"/>
</dbReference>
<dbReference type="PANTHER" id="PTHR33692">
    <property type="entry name" value="RIBOSOME MATURATION FACTOR RIMM"/>
    <property type="match status" value="1"/>
</dbReference>
<dbReference type="PANTHER" id="PTHR33692:SF1">
    <property type="entry name" value="RIBOSOME MATURATION FACTOR RIMM"/>
    <property type="match status" value="1"/>
</dbReference>
<dbReference type="Pfam" id="PF05239">
    <property type="entry name" value="PRC"/>
    <property type="match status" value="1"/>
</dbReference>
<dbReference type="Pfam" id="PF01782">
    <property type="entry name" value="RimM"/>
    <property type="match status" value="1"/>
</dbReference>
<dbReference type="SUPFAM" id="SSF50346">
    <property type="entry name" value="PRC-barrel domain"/>
    <property type="match status" value="1"/>
</dbReference>
<dbReference type="SUPFAM" id="SSF50447">
    <property type="entry name" value="Translation proteins"/>
    <property type="match status" value="1"/>
</dbReference>